<evidence type="ECO:0000250" key="1"/>
<evidence type="ECO:0000305" key="2"/>
<keyword id="KW-0150">Chloroplast</keyword>
<keyword id="KW-0934">Plastid</keyword>
<keyword id="KW-0687">Ribonucleoprotein</keyword>
<keyword id="KW-0689">Ribosomal protein</keyword>
<keyword id="KW-0694">RNA-binding</keyword>
<keyword id="KW-0699">rRNA-binding</keyword>
<gene>
    <name type="primary">rps8</name>
</gene>
<name>RR8_PLAOC</name>
<geneLocation type="chloroplast"/>
<accession>Q09G10</accession>
<reference key="1">
    <citation type="journal article" date="2006" name="BMC Plant Biol.">
        <title>Rapid and accurate pyrosequencing of angiosperm plastid genomes.</title>
        <authorList>
            <person name="Moore M.J."/>
            <person name="Dhingra A."/>
            <person name="Soltis P.S."/>
            <person name="Shaw R."/>
            <person name="Farmerie W.G."/>
            <person name="Folta K.M."/>
            <person name="Soltis D.E."/>
        </authorList>
    </citation>
    <scope>NUCLEOTIDE SEQUENCE [LARGE SCALE GENOMIC DNA]</scope>
</reference>
<comment type="function">
    <text evidence="1">One of the primary rRNA binding proteins, it binds directly to 16S rRNA central domain where it helps coordinate assembly of the platform of the 30S subunit.</text>
</comment>
<comment type="subunit">
    <text evidence="1">Part of the 30S ribosomal subunit.</text>
</comment>
<comment type="subcellular location">
    <subcellularLocation>
        <location>Plastid</location>
        <location>Chloroplast</location>
    </subcellularLocation>
</comment>
<comment type="similarity">
    <text evidence="2">Belongs to the universal ribosomal protein uS8 family.</text>
</comment>
<protein>
    <recommendedName>
        <fullName evidence="2">Small ribosomal subunit protein uS8c</fullName>
    </recommendedName>
    <alternativeName>
        <fullName>30S ribosomal protein S8, chloroplastic</fullName>
    </alternativeName>
</protein>
<organism>
    <name type="scientific">Platanus occidentalis</name>
    <name type="common">Sycamore</name>
    <name type="synonym">American plane tree</name>
    <dbReference type="NCBI Taxonomy" id="4403"/>
    <lineage>
        <taxon>Eukaryota</taxon>
        <taxon>Viridiplantae</taxon>
        <taxon>Streptophyta</taxon>
        <taxon>Embryophyta</taxon>
        <taxon>Tracheophyta</taxon>
        <taxon>Spermatophyta</taxon>
        <taxon>Magnoliopsida</taxon>
        <taxon>Proteales</taxon>
        <taxon>Platanaceae</taxon>
        <taxon>Platanus</taxon>
    </lineage>
</organism>
<dbReference type="EMBL" id="DQ923116">
    <property type="protein sequence ID" value="ABI49815.1"/>
    <property type="molecule type" value="Genomic_DNA"/>
</dbReference>
<dbReference type="RefSeq" id="YP_740601.1">
    <property type="nucleotide sequence ID" value="NC_008335.1"/>
</dbReference>
<dbReference type="SMR" id="Q09G10"/>
<dbReference type="GeneID" id="4271276"/>
<dbReference type="GO" id="GO:0009507">
    <property type="term" value="C:chloroplast"/>
    <property type="evidence" value="ECO:0007669"/>
    <property type="project" value="UniProtKB-SubCell"/>
</dbReference>
<dbReference type="GO" id="GO:1990904">
    <property type="term" value="C:ribonucleoprotein complex"/>
    <property type="evidence" value="ECO:0007669"/>
    <property type="project" value="UniProtKB-KW"/>
</dbReference>
<dbReference type="GO" id="GO:0005840">
    <property type="term" value="C:ribosome"/>
    <property type="evidence" value="ECO:0007669"/>
    <property type="project" value="UniProtKB-KW"/>
</dbReference>
<dbReference type="GO" id="GO:0019843">
    <property type="term" value="F:rRNA binding"/>
    <property type="evidence" value="ECO:0007669"/>
    <property type="project" value="UniProtKB-UniRule"/>
</dbReference>
<dbReference type="GO" id="GO:0003735">
    <property type="term" value="F:structural constituent of ribosome"/>
    <property type="evidence" value="ECO:0007669"/>
    <property type="project" value="InterPro"/>
</dbReference>
<dbReference type="GO" id="GO:0006412">
    <property type="term" value="P:translation"/>
    <property type="evidence" value="ECO:0007669"/>
    <property type="project" value="UniProtKB-UniRule"/>
</dbReference>
<dbReference type="FunFam" id="3.30.1490.10:FF:000001">
    <property type="entry name" value="30S ribosomal protein S8"/>
    <property type="match status" value="1"/>
</dbReference>
<dbReference type="FunFam" id="3.30.1370.30:FF:000004">
    <property type="entry name" value="30S ribosomal protein S8, chloroplastic"/>
    <property type="match status" value="1"/>
</dbReference>
<dbReference type="Gene3D" id="3.30.1370.30">
    <property type="match status" value="1"/>
</dbReference>
<dbReference type="Gene3D" id="3.30.1490.10">
    <property type="match status" value="1"/>
</dbReference>
<dbReference type="HAMAP" id="MF_01302_B">
    <property type="entry name" value="Ribosomal_uS8_B"/>
    <property type="match status" value="1"/>
</dbReference>
<dbReference type="InterPro" id="IPR000630">
    <property type="entry name" value="Ribosomal_uS8"/>
</dbReference>
<dbReference type="InterPro" id="IPR047863">
    <property type="entry name" value="Ribosomal_uS8_CS"/>
</dbReference>
<dbReference type="InterPro" id="IPR035987">
    <property type="entry name" value="Ribosomal_uS8_sf"/>
</dbReference>
<dbReference type="NCBIfam" id="NF001109">
    <property type="entry name" value="PRK00136.1"/>
    <property type="match status" value="1"/>
</dbReference>
<dbReference type="PANTHER" id="PTHR11758">
    <property type="entry name" value="40S RIBOSOMAL PROTEIN S15A"/>
    <property type="match status" value="1"/>
</dbReference>
<dbReference type="Pfam" id="PF00410">
    <property type="entry name" value="Ribosomal_S8"/>
    <property type="match status" value="1"/>
</dbReference>
<dbReference type="SUPFAM" id="SSF56047">
    <property type="entry name" value="Ribosomal protein S8"/>
    <property type="match status" value="1"/>
</dbReference>
<dbReference type="PROSITE" id="PS00053">
    <property type="entry name" value="RIBOSOMAL_S8"/>
    <property type="match status" value="1"/>
</dbReference>
<sequence>MGRDTIADIITSIRNADMDKKGRVRIGYTNIAENIIKILLREGFIENVRKHRESNKYFLVSTLRHRRNRKRPYKTILKRISRPGLRIYSNYQRIPRILGGIGIVILSTSRGIMTDREARLEGIGGEILCYIW</sequence>
<proteinExistence type="inferred from homology"/>
<feature type="chain" id="PRO_0000290990" description="Small ribosomal subunit protein uS8c">
    <location>
        <begin position="1"/>
        <end position="132"/>
    </location>
</feature>